<organism>
    <name type="scientific">Nidirana pleuraden</name>
    <name type="common">Yunnan pond frog</name>
    <name type="synonym">Babina pleuraden</name>
    <dbReference type="NCBI Taxonomy" id="369511"/>
    <lineage>
        <taxon>Eukaryota</taxon>
        <taxon>Metazoa</taxon>
        <taxon>Chordata</taxon>
        <taxon>Craniata</taxon>
        <taxon>Vertebrata</taxon>
        <taxon>Euteleostomi</taxon>
        <taxon>Amphibia</taxon>
        <taxon>Batrachia</taxon>
        <taxon>Anura</taxon>
        <taxon>Neobatrachia</taxon>
        <taxon>Ranoidea</taxon>
        <taxon>Ranidae</taxon>
        <taxon>Nidirana</taxon>
    </lineage>
</organism>
<dbReference type="EMBL" id="EF621707">
    <property type="protein sequence ID" value="ABU95403.1"/>
    <property type="molecule type" value="mRNA"/>
</dbReference>
<dbReference type="GO" id="GO:0005576">
    <property type="term" value="C:extracellular region"/>
    <property type="evidence" value="ECO:0007669"/>
    <property type="project" value="UniProtKB-SubCell"/>
</dbReference>
<dbReference type="GO" id="GO:0042742">
    <property type="term" value="P:defense response to bacterium"/>
    <property type="evidence" value="ECO:0007669"/>
    <property type="project" value="UniProtKB-KW"/>
</dbReference>
<dbReference type="GO" id="GO:0031640">
    <property type="term" value="P:killing of cells of another organism"/>
    <property type="evidence" value="ECO:0007669"/>
    <property type="project" value="UniProtKB-KW"/>
</dbReference>
<dbReference type="InterPro" id="IPR018247">
    <property type="entry name" value="EF_Hand_1_Ca_BS"/>
</dbReference>
<dbReference type="InterPro" id="IPR004275">
    <property type="entry name" value="Frog_antimicrobial_propeptide"/>
</dbReference>
<dbReference type="Pfam" id="PF03032">
    <property type="entry name" value="FSAP_sig_propep"/>
    <property type="match status" value="1"/>
</dbReference>
<accession>A8B5P0</accession>
<name>PLEA2_NIDPL</name>
<protein>
    <recommendedName>
        <fullName>Pleurain-A2</fullName>
    </recommendedName>
</protein>
<feature type="signal peptide" evidence="2">
    <location>
        <begin position="1"/>
        <end position="22"/>
    </location>
</feature>
<feature type="propeptide" id="PRO_0000314000" evidence="1">
    <location>
        <begin position="23"/>
        <end position="43"/>
    </location>
</feature>
<feature type="peptide" id="PRO_0000314001" description="Pleurain-A2">
    <location>
        <begin position="44"/>
        <end position="69"/>
    </location>
</feature>
<feature type="disulfide bond">
    <location>
        <begin position="63"/>
        <end position="69"/>
    </location>
</feature>
<comment type="function">
    <text evidence="3">Antimicrobial peptide. Has activity against the Gram-positive bacterium S.aureus ATCC2592 (MIC=15 ug/ml), the Gram-negative bacteria E.coli ATCC25922 (MIC=60 ug/ml), B.dysenteriae (MIC=60 ug/ml), H.pylori NTCT11637 (MIC=30 ug/ml), and the fungus C.albicans ATCC2002 (MIC=30 ug/ml). Has little hemolytic activity on rabbit red blood cells.</text>
</comment>
<comment type="subcellular location">
    <subcellularLocation>
        <location evidence="3">Secreted</location>
    </subcellularLocation>
</comment>
<comment type="tissue specificity">
    <text evidence="3">Expressed by the skin glands.</text>
</comment>
<comment type="mass spectrometry" mass="3024.8" method="MALDI" evidence="3"/>
<comment type="similarity">
    <text evidence="4">Belongs to the frog skin active peptide (FSAP) family. Pleurain subfamily.</text>
</comment>
<reference key="1">
    <citation type="journal article" date="2007" name="Peptides">
        <title>A new family of antimicrobial peptides from skin secretions of Rana pleuraden.</title>
        <authorList>
            <person name="Wang X."/>
            <person name="Song Y."/>
            <person name="Li J."/>
            <person name="Liu H."/>
            <person name="Xu X."/>
            <person name="Lai R."/>
            <person name="Zhang K."/>
        </authorList>
    </citation>
    <scope>NUCLEOTIDE SEQUENCE [MRNA]</scope>
    <scope>PROTEIN SEQUENCE OF 44-69</scope>
    <scope>FUNCTION</scope>
    <scope>SUBCELLULAR LOCATION</scope>
    <scope>TISSUE SPECIFICITY</scope>
    <scope>MASS SPECTROMETRY</scope>
    <source>
        <tissue>Skin</tissue>
        <tissue>Skin secretion</tissue>
    </source>
</reference>
<keyword id="KW-0878">Amphibian defense peptide</keyword>
<keyword id="KW-0044">Antibiotic</keyword>
<keyword id="KW-0929">Antimicrobial</keyword>
<keyword id="KW-0165">Cleavage on pair of basic residues</keyword>
<keyword id="KW-0204">Cytolysis</keyword>
<keyword id="KW-0903">Direct protein sequencing</keyword>
<keyword id="KW-1015">Disulfide bond</keyword>
<keyword id="KW-0354">Hemolysis</keyword>
<keyword id="KW-0964">Secreted</keyword>
<keyword id="KW-0732">Signal</keyword>
<proteinExistence type="evidence at protein level"/>
<evidence type="ECO:0000250" key="1"/>
<evidence type="ECO:0000255" key="2"/>
<evidence type="ECO:0000269" key="3">
    <source>
    </source>
</evidence>
<evidence type="ECO:0000305" key="4"/>
<sequence length="69" mass="8075">MFTLKKTLLLLYFLGTISISLCKQERDADEDDGRKMTEEEVKRSIITMTKEAKLPQSWKQIACRLYNTC</sequence>